<name>S2543_DANRE</name>
<keyword id="KW-0472">Membrane</keyword>
<keyword id="KW-0496">Mitochondrion</keyword>
<keyword id="KW-0999">Mitochondrion inner membrane</keyword>
<keyword id="KW-1185">Reference proteome</keyword>
<keyword id="KW-0677">Repeat</keyword>
<keyword id="KW-0812">Transmembrane</keyword>
<keyword id="KW-1133">Transmembrane helix</keyword>
<keyword id="KW-0813">Transport</keyword>
<proteinExistence type="evidence at transcript level"/>
<dbReference type="EMBL" id="BC085377">
    <property type="protein sequence ID" value="AAH85377.1"/>
    <property type="molecule type" value="mRNA"/>
</dbReference>
<dbReference type="RefSeq" id="NP_001004497.2">
    <property type="nucleotide sequence ID" value="NM_001004497.2"/>
</dbReference>
<dbReference type="SMR" id="Q5U3V7"/>
<dbReference type="FunCoup" id="Q5U3V7">
    <property type="interactions" value="328"/>
</dbReference>
<dbReference type="STRING" id="7955.ENSDARP00000131401"/>
<dbReference type="PaxDb" id="7955-ENSDARP00000104989"/>
<dbReference type="GeneID" id="796731"/>
<dbReference type="KEGG" id="dre:796731"/>
<dbReference type="AGR" id="ZFIN:ZDB-GENE-030616-69"/>
<dbReference type="CTD" id="203427"/>
<dbReference type="ZFIN" id="ZDB-GENE-030616-69">
    <property type="gene designation" value="slc25a43"/>
</dbReference>
<dbReference type="eggNOG" id="KOG0752">
    <property type="taxonomic scope" value="Eukaryota"/>
</dbReference>
<dbReference type="InParanoid" id="Q5U3V7"/>
<dbReference type="OrthoDB" id="270584at2759"/>
<dbReference type="PhylomeDB" id="Q5U3V7"/>
<dbReference type="PRO" id="PR:Q5U3V7"/>
<dbReference type="Proteomes" id="UP000000437">
    <property type="component" value="Chromosome 14"/>
</dbReference>
<dbReference type="GO" id="GO:0005743">
    <property type="term" value="C:mitochondrial inner membrane"/>
    <property type="evidence" value="ECO:0007669"/>
    <property type="project" value="UniProtKB-SubCell"/>
</dbReference>
<dbReference type="GO" id="GO:0055085">
    <property type="term" value="P:transmembrane transport"/>
    <property type="evidence" value="ECO:0007669"/>
    <property type="project" value="InterPro"/>
</dbReference>
<dbReference type="FunFam" id="1.50.40.10:FF:000098">
    <property type="entry name" value="Mitochondrial substrate carrier family protein"/>
    <property type="match status" value="1"/>
</dbReference>
<dbReference type="Gene3D" id="1.50.40.10">
    <property type="entry name" value="Mitochondrial carrier domain"/>
    <property type="match status" value="1"/>
</dbReference>
<dbReference type="InterPro" id="IPR002067">
    <property type="entry name" value="Mit_carrier"/>
</dbReference>
<dbReference type="InterPro" id="IPR018108">
    <property type="entry name" value="Mitochondrial_sb/sol_carrier"/>
</dbReference>
<dbReference type="InterPro" id="IPR023395">
    <property type="entry name" value="Mt_carrier_dom_sf"/>
</dbReference>
<dbReference type="PANTHER" id="PTHR24089">
    <property type="entry name" value="SOLUTE CARRIER FAMILY 25"/>
    <property type="match status" value="1"/>
</dbReference>
<dbReference type="Pfam" id="PF00153">
    <property type="entry name" value="Mito_carr"/>
    <property type="match status" value="3"/>
</dbReference>
<dbReference type="PRINTS" id="PR00926">
    <property type="entry name" value="MITOCARRIER"/>
</dbReference>
<dbReference type="SUPFAM" id="SSF103506">
    <property type="entry name" value="Mitochondrial carrier"/>
    <property type="match status" value="1"/>
</dbReference>
<dbReference type="PROSITE" id="PS50920">
    <property type="entry name" value="SOLCAR"/>
    <property type="match status" value="3"/>
</dbReference>
<sequence>MATVKKDARLTSSQSLMCVGFAGIFSKTVTSPLEVVKILSQVGTFHCKRGFLHSFVLICQNEGLRAFWKGNMVSCLRLFPYSAIHLATYKNIVNLHIDELGDISQWRAIVAGGLAGISAALATYPLEVVETRLIAQNCQEPTYRGLLHSLSVIYRNEGLQALYRGFSLTVLGAVPFSVGCYAVYINLDKLWQERHVRFTSLQNFINGCLAAGVAQTLSFPFETVKKKMQAQSLVLPHCGGVDVHFNGMADCFRQVIKNKGVMALWSGLTANMVKIVPYFGLLFSCFEMCKQVCLYRNGYIISPPSYKLKPGVDQSLGPYELQEFKRYLRNRKSHKAQSSSIGNRW</sequence>
<feature type="chain" id="PRO_0000291825" description="Solute carrier family 25 member 43">
    <location>
        <begin position="1"/>
        <end position="345"/>
    </location>
</feature>
<feature type="transmembrane region" description="Helical; Name=1" evidence="2">
    <location>
        <begin position="16"/>
        <end position="36"/>
    </location>
</feature>
<feature type="transmembrane region" description="Helical; Name=2" evidence="2">
    <location>
        <begin position="67"/>
        <end position="87"/>
    </location>
</feature>
<feature type="transmembrane region" description="Helical; Name=3" evidence="2">
    <location>
        <begin position="109"/>
        <end position="129"/>
    </location>
</feature>
<feature type="transmembrane region" description="Helical; Name=4" evidence="2">
    <location>
        <begin position="165"/>
        <end position="185"/>
    </location>
</feature>
<feature type="transmembrane region" description="Helical; Name=5" evidence="2">
    <location>
        <begin position="204"/>
        <end position="224"/>
    </location>
</feature>
<feature type="transmembrane region" description="Helical; Name=6" evidence="2">
    <location>
        <begin position="261"/>
        <end position="281"/>
    </location>
</feature>
<feature type="repeat" description="Solcar 1">
    <location>
        <begin position="11"/>
        <end position="100"/>
    </location>
</feature>
<feature type="repeat" description="Solcar 2">
    <location>
        <begin position="104"/>
        <end position="195"/>
    </location>
</feature>
<feature type="repeat" description="Solcar 3">
    <location>
        <begin position="199"/>
        <end position="297"/>
    </location>
</feature>
<reference key="1">
    <citation type="submission" date="2004-11" db="EMBL/GenBank/DDBJ databases">
        <authorList>
            <consortium name="NIH - Zebrafish Gene Collection (ZGC) project"/>
        </authorList>
    </citation>
    <scope>NUCLEOTIDE SEQUENCE [LARGE SCALE MRNA]</scope>
    <source>
        <tissue>Embryo</tissue>
    </source>
</reference>
<evidence type="ECO:0000250" key="1"/>
<evidence type="ECO:0000255" key="2"/>
<evidence type="ECO:0000305" key="3"/>
<accession>Q5U3V7</accession>
<organism>
    <name type="scientific">Danio rerio</name>
    <name type="common">Zebrafish</name>
    <name type="synonym">Brachydanio rerio</name>
    <dbReference type="NCBI Taxonomy" id="7955"/>
    <lineage>
        <taxon>Eukaryota</taxon>
        <taxon>Metazoa</taxon>
        <taxon>Chordata</taxon>
        <taxon>Craniata</taxon>
        <taxon>Vertebrata</taxon>
        <taxon>Euteleostomi</taxon>
        <taxon>Actinopterygii</taxon>
        <taxon>Neopterygii</taxon>
        <taxon>Teleostei</taxon>
        <taxon>Ostariophysi</taxon>
        <taxon>Cypriniformes</taxon>
        <taxon>Danionidae</taxon>
        <taxon>Danioninae</taxon>
        <taxon>Danio</taxon>
    </lineage>
</organism>
<comment type="subcellular location">
    <subcellularLocation>
        <location evidence="1">Mitochondrion inner membrane</location>
        <topology evidence="1">Multi-pass membrane protein</topology>
    </subcellularLocation>
</comment>
<comment type="similarity">
    <text evidence="3">Belongs to the mitochondrial carrier (TC 2.A.29) family.</text>
</comment>
<gene>
    <name type="primary">slc25a43</name>
    <name type="ORF">zgc:101590</name>
</gene>
<protein>
    <recommendedName>
        <fullName>Solute carrier family 25 member 43</fullName>
    </recommendedName>
</protein>